<keyword id="KW-0963">Cytoplasm</keyword>
<keyword id="KW-0507">mRNA processing</keyword>
<keyword id="KW-0508">mRNA splicing</keyword>
<keyword id="KW-0539">Nucleus</keyword>
<keyword id="KW-1185">Reference proteome</keyword>
<keyword id="KW-0747">Spliceosome</keyword>
<proteinExistence type="inferred from homology"/>
<organism>
    <name type="scientific">Pyricularia oryzae (strain 70-15 / ATCC MYA-4617 / FGSC 8958)</name>
    <name type="common">Rice blast fungus</name>
    <name type="synonym">Magnaporthe oryzae</name>
    <dbReference type="NCBI Taxonomy" id="242507"/>
    <lineage>
        <taxon>Eukaryota</taxon>
        <taxon>Fungi</taxon>
        <taxon>Dikarya</taxon>
        <taxon>Ascomycota</taxon>
        <taxon>Pezizomycotina</taxon>
        <taxon>Sordariomycetes</taxon>
        <taxon>Sordariomycetidae</taxon>
        <taxon>Magnaporthales</taxon>
        <taxon>Pyriculariaceae</taxon>
        <taxon>Pyricularia</taxon>
    </lineage>
</organism>
<sequence length="246" mass="28041">MARNSEKAQSMLFRFREAQAADLGIIDAGRTRRPRAITEQDSIPACEKWRGQVLKDISRKVSRIQESSLSDYQIRDLNDEINKLMREKHMWEVQIRNLGGPNYTRAGGAKVYDEAGKEIGGAGRGYRYFGRAKELPGVKELFEAARAKKGDEKPLEARDDLRKQVDAAYYGYSPDEEDDELLAYEAAKEKEAFENLADNRKGEQLPPGWEPLPGDNGDGKGWELPTVEEVQQELINRRKQRLLNQL</sequence>
<protein>
    <recommendedName>
        <fullName>Pre-mRNA-splicing factor ISY1</fullName>
    </recommendedName>
</protein>
<evidence type="ECO:0000250" key="1"/>
<evidence type="ECO:0000256" key="2">
    <source>
        <dbReference type="SAM" id="MobiDB-lite"/>
    </source>
</evidence>
<evidence type="ECO:0000305" key="3"/>
<name>ISY1_PYRO7</name>
<accession>Q51LS1</accession>
<accession>A4RBQ8</accession>
<accession>G4NIV9</accession>
<accession>Q2KFW0</accession>
<feature type="chain" id="PRO_0000192971" description="Pre-mRNA-splicing factor ISY1">
    <location>
        <begin position="1"/>
        <end position="246"/>
    </location>
</feature>
<feature type="region of interest" description="Disordered" evidence="2">
    <location>
        <begin position="196"/>
        <end position="223"/>
    </location>
</feature>
<comment type="function">
    <text evidence="1">Involved in pre-mRNA splicing.</text>
</comment>
<comment type="subunit">
    <text evidence="1">Associated with the spliceosome.</text>
</comment>
<comment type="subcellular location">
    <subcellularLocation>
        <location evidence="1">Cytoplasm</location>
    </subcellularLocation>
    <subcellularLocation>
        <location evidence="1">Nucleus</location>
    </subcellularLocation>
</comment>
<comment type="similarity">
    <text evidence="3">Belongs to the ISY1 family.</text>
</comment>
<comment type="sequence caution" evidence="3">
    <conflict type="erroneous gene model prediction">
        <sequence resource="EMBL-CDS" id="EAQ71168"/>
    </conflict>
</comment>
<reference key="1">
    <citation type="journal article" date="2005" name="Nature">
        <title>The genome sequence of the rice blast fungus Magnaporthe grisea.</title>
        <authorList>
            <person name="Dean R.A."/>
            <person name="Talbot N.J."/>
            <person name="Ebbole D.J."/>
            <person name="Farman M.L."/>
            <person name="Mitchell T.K."/>
            <person name="Orbach M.J."/>
            <person name="Thon M.R."/>
            <person name="Kulkarni R."/>
            <person name="Xu J.-R."/>
            <person name="Pan H."/>
            <person name="Read N.D."/>
            <person name="Lee Y.-H."/>
            <person name="Carbone I."/>
            <person name="Brown D."/>
            <person name="Oh Y.Y."/>
            <person name="Donofrio N."/>
            <person name="Jeong J.S."/>
            <person name="Soanes D.M."/>
            <person name="Djonovic S."/>
            <person name="Kolomiets E."/>
            <person name="Rehmeyer C."/>
            <person name="Li W."/>
            <person name="Harding M."/>
            <person name="Kim S."/>
            <person name="Lebrun M.-H."/>
            <person name="Bohnert H."/>
            <person name="Coughlan S."/>
            <person name="Butler J."/>
            <person name="Calvo S.E."/>
            <person name="Ma L.-J."/>
            <person name="Nicol R."/>
            <person name="Purcell S."/>
            <person name="Nusbaum C."/>
            <person name="Galagan J.E."/>
            <person name="Birren B.W."/>
        </authorList>
    </citation>
    <scope>NUCLEOTIDE SEQUENCE [LARGE SCALE GENOMIC DNA]</scope>
    <source>
        <strain>70-15 / ATCC MYA-4617 / FGSC 8958</strain>
    </source>
</reference>
<gene>
    <name type="primary">ISY1</name>
    <name type="ORF">MGCH7_ch7g575</name>
    <name type="ORF">MGG_02820</name>
</gene>
<dbReference type="EMBL" id="CM000230">
    <property type="protein sequence ID" value="EAQ71168.1"/>
    <property type="status" value="ALT_SEQ"/>
    <property type="molecule type" value="Genomic_DNA"/>
</dbReference>
<dbReference type="EMBL" id="CM001237">
    <property type="protein sequence ID" value="EHA46175.1"/>
    <property type="molecule type" value="Genomic_DNA"/>
</dbReference>
<dbReference type="RefSeq" id="XP_003720918.1">
    <property type="nucleotide sequence ID" value="XM_003720870.1"/>
</dbReference>
<dbReference type="SMR" id="Q51LS1"/>
<dbReference type="FunCoup" id="Q51LS1">
    <property type="interactions" value="213"/>
</dbReference>
<dbReference type="STRING" id="242507.Q51LS1"/>
<dbReference type="EnsemblFungi" id="MGG_02820T0">
    <property type="protein sequence ID" value="MGG_02820T0"/>
    <property type="gene ID" value="MGG_02820"/>
</dbReference>
<dbReference type="GeneID" id="2682373"/>
<dbReference type="KEGG" id="mgr:MGG_02820"/>
<dbReference type="VEuPathDB" id="FungiDB:MGG_02820"/>
<dbReference type="eggNOG" id="KOG3068">
    <property type="taxonomic scope" value="Eukaryota"/>
</dbReference>
<dbReference type="HOGENOM" id="CLU_043453_2_0_1"/>
<dbReference type="InParanoid" id="Q51LS1"/>
<dbReference type="OMA" id="YHWERRI"/>
<dbReference type="OrthoDB" id="1739576at2759"/>
<dbReference type="Proteomes" id="UP000009058">
    <property type="component" value="Chromosome 7"/>
</dbReference>
<dbReference type="GO" id="GO:0005737">
    <property type="term" value="C:cytoplasm"/>
    <property type="evidence" value="ECO:0007669"/>
    <property type="project" value="UniProtKB-SubCell"/>
</dbReference>
<dbReference type="GO" id="GO:0005681">
    <property type="term" value="C:spliceosomal complex"/>
    <property type="evidence" value="ECO:0007669"/>
    <property type="project" value="UniProtKB-KW"/>
</dbReference>
<dbReference type="GO" id="GO:0000350">
    <property type="term" value="P:generation of catalytic spliceosome for second transesterification step"/>
    <property type="evidence" value="ECO:0007669"/>
    <property type="project" value="InterPro"/>
</dbReference>
<dbReference type="FunFam" id="1.10.287.660:FF:000001">
    <property type="entry name" value="pre-mRNA-splicing factor ISY1 homolog"/>
    <property type="match status" value="1"/>
</dbReference>
<dbReference type="Gene3D" id="1.10.287.660">
    <property type="entry name" value="Helix hairpin bin"/>
    <property type="match status" value="1"/>
</dbReference>
<dbReference type="InterPro" id="IPR029012">
    <property type="entry name" value="Helix_hairpin_bin_sf"/>
</dbReference>
<dbReference type="InterPro" id="IPR009360">
    <property type="entry name" value="Isy1"/>
</dbReference>
<dbReference type="InterPro" id="IPR037200">
    <property type="entry name" value="Isy1_sf"/>
</dbReference>
<dbReference type="PANTHER" id="PTHR13021">
    <property type="entry name" value="PRE-MRNA-SPLICING FACTOR ISY1"/>
    <property type="match status" value="1"/>
</dbReference>
<dbReference type="Pfam" id="PF06246">
    <property type="entry name" value="Isy1"/>
    <property type="match status" value="1"/>
</dbReference>
<dbReference type="SUPFAM" id="SSF140102">
    <property type="entry name" value="ISY1 domain-like"/>
    <property type="match status" value="1"/>
</dbReference>